<comment type="function">
    <text evidence="1">Degrades thiamine by replacing its thiazole moiety with a wide range of nucleophiles.</text>
</comment>
<comment type="catalytic activity">
    <reaction evidence="1">
        <text>pyridine + thiamine = heteropyrithiamine + 5-(2-hydroxyethyl)-4-methylthiazole</text>
        <dbReference type="Rhea" id="RHEA:17697"/>
        <dbReference type="ChEBI" id="CHEBI:11222"/>
        <dbReference type="ChEBI" id="CHEBI:16227"/>
        <dbReference type="ChEBI" id="CHEBI:17957"/>
        <dbReference type="ChEBI" id="CHEBI:18385"/>
        <dbReference type="EC" id="2.5.1.2"/>
    </reaction>
</comment>
<comment type="biophysicochemical properties">
    <kinetics>
        <KM evidence="1">3.7 uM for thiamine</KM>
        <text evidence="1">kcat is 34 sec(-1).</text>
    </kinetics>
</comment>
<comment type="subunit">
    <text evidence="1">Monomer.</text>
</comment>
<comment type="subcellular location">
    <subcellularLocation>
        <location evidence="5">Secreted</location>
    </subcellularLocation>
</comment>
<comment type="induction">
    <text>Inhibited by organomercurials and iodoacetate.</text>
</comment>
<comment type="mass spectrometry" mass="42198.0" error="1.0" method="Electrospray" evidence="1"/>
<proteinExistence type="evidence at protein level"/>
<accession>P45741</accession>
<dbReference type="EC" id="2.5.1.2" evidence="1"/>
<dbReference type="EMBL" id="U17168">
    <property type="protein sequence ID" value="AAC44156.1"/>
    <property type="molecule type" value="Genomic_DNA"/>
</dbReference>
<dbReference type="PIR" id="T47118">
    <property type="entry name" value="T47118"/>
</dbReference>
<dbReference type="PDB" id="2THI">
    <property type="method" value="X-ray"/>
    <property type="resolution" value="2.50 A"/>
    <property type="chains" value="A/B=31-409"/>
</dbReference>
<dbReference type="PDB" id="3THI">
    <property type="method" value="X-ray"/>
    <property type="resolution" value="2.00 A"/>
    <property type="chains" value="A=39-409"/>
</dbReference>
<dbReference type="PDB" id="4THI">
    <property type="method" value="X-ray"/>
    <property type="resolution" value="2.00 A"/>
    <property type="chains" value="A=39-400"/>
</dbReference>
<dbReference type="PDBsum" id="2THI"/>
<dbReference type="PDBsum" id="3THI"/>
<dbReference type="PDBsum" id="4THI"/>
<dbReference type="SMR" id="P45741"/>
<dbReference type="BioCyc" id="MetaCyc:MONOMER-16819"/>
<dbReference type="BRENDA" id="2.5.1.2">
    <property type="organism ID" value="710"/>
</dbReference>
<dbReference type="EvolutionaryTrace" id="P45741"/>
<dbReference type="GO" id="GO:0005576">
    <property type="term" value="C:extracellular region"/>
    <property type="evidence" value="ECO:0007669"/>
    <property type="project" value="UniProtKB-SubCell"/>
</dbReference>
<dbReference type="GO" id="GO:0050332">
    <property type="term" value="F:thiamine pyridinylase activity"/>
    <property type="evidence" value="ECO:0007669"/>
    <property type="project" value="UniProtKB-EC"/>
</dbReference>
<dbReference type="GO" id="GO:0009230">
    <property type="term" value="P:thiamine catabolic process"/>
    <property type="evidence" value="ECO:0007669"/>
    <property type="project" value="UniProtKB-KW"/>
</dbReference>
<dbReference type="CDD" id="cd13524">
    <property type="entry name" value="PBP2_Thiaminase_I"/>
    <property type="match status" value="1"/>
</dbReference>
<dbReference type="Gene3D" id="3.40.190.10">
    <property type="entry name" value="Periplasmic binding protein-like II"/>
    <property type="match status" value="2"/>
</dbReference>
<dbReference type="InterPro" id="IPR054393">
    <property type="entry name" value="Thiaminase-1_dom"/>
</dbReference>
<dbReference type="InterPro" id="IPR030901">
    <property type="entry name" value="Thiaminase_BcmE"/>
</dbReference>
<dbReference type="NCBIfam" id="TIGR04541">
    <property type="entry name" value="thiaminase_BcmE"/>
    <property type="match status" value="1"/>
</dbReference>
<dbReference type="Pfam" id="PF22141">
    <property type="entry name" value="Thiaminase-1_dom"/>
    <property type="match status" value="1"/>
</dbReference>
<dbReference type="SUPFAM" id="SSF53850">
    <property type="entry name" value="Periplasmic binding protein-like II"/>
    <property type="match status" value="1"/>
</dbReference>
<organism>
    <name type="scientific">Paenibacillus thiaminolyticus</name>
    <name type="common">Bacillus thiaminolyticus</name>
    <dbReference type="NCBI Taxonomy" id="49283"/>
    <lineage>
        <taxon>Bacteria</taxon>
        <taxon>Bacillati</taxon>
        <taxon>Bacillota</taxon>
        <taxon>Bacilli</taxon>
        <taxon>Bacillales</taxon>
        <taxon>Paenibacillaceae</taxon>
        <taxon>Paenibacillus</taxon>
    </lineage>
</organism>
<name>THI1_PANTH</name>
<feature type="signal peptide" evidence="1">
    <location>
        <begin position="1"/>
        <end position="29"/>
    </location>
</feature>
<feature type="chain" id="PRO_0000022489" description="Thiaminase-1">
    <location>
        <begin position="30"/>
        <end position="409"/>
    </location>
</feature>
<feature type="active site" description="Nucleophile" evidence="5 6">
    <location>
        <position position="143"/>
    </location>
</feature>
<feature type="active site" description="Proton acceptor" evidence="6">
    <location>
        <position position="271"/>
    </location>
</feature>
<feature type="sequence variant" description="In part of the chains.">
    <location>
        <position position="30"/>
    </location>
</feature>
<feature type="sequence variant" description="In part of the chains.">
    <location>
        <position position="31"/>
    </location>
</feature>
<feature type="mutagenesis site" description="Loss of activity." evidence="1">
    <original>C</original>
    <variation>S</variation>
    <location>
        <position position="143"/>
    </location>
</feature>
<feature type="mutagenesis site" description="Loss of activity." evidence="2">
    <original>E</original>
    <variation>Q</variation>
    <location>
        <position position="271"/>
    </location>
</feature>
<feature type="strand" evidence="10">
    <location>
        <begin position="40"/>
        <end position="44"/>
    </location>
</feature>
<feature type="helix" evidence="10">
    <location>
        <begin position="52"/>
        <end position="66"/>
    </location>
</feature>
<feature type="strand" evidence="10">
    <location>
        <begin position="70"/>
        <end position="74"/>
    </location>
</feature>
<feature type="turn" evidence="10">
    <location>
        <begin position="79"/>
        <end position="81"/>
    </location>
</feature>
<feature type="strand" evidence="10">
    <location>
        <begin position="90"/>
        <end position="94"/>
    </location>
</feature>
<feature type="helix" evidence="10">
    <location>
        <begin position="95"/>
        <end position="97"/>
    </location>
</feature>
<feature type="helix" evidence="10">
    <location>
        <begin position="98"/>
        <end position="103"/>
    </location>
</feature>
<feature type="helix" evidence="10">
    <location>
        <begin position="112"/>
        <end position="114"/>
    </location>
</feature>
<feature type="helix" evidence="10">
    <location>
        <begin position="118"/>
        <end position="120"/>
    </location>
</feature>
<feature type="helix" evidence="10">
    <location>
        <begin position="123"/>
        <end position="128"/>
    </location>
</feature>
<feature type="strand" evidence="10">
    <location>
        <begin position="138"/>
        <end position="143"/>
    </location>
</feature>
<feature type="strand" evidence="10">
    <location>
        <begin position="145"/>
        <end position="150"/>
    </location>
</feature>
<feature type="helix" evidence="10">
    <location>
        <begin position="154"/>
        <end position="157"/>
    </location>
</feature>
<feature type="helix" evidence="10">
    <location>
        <begin position="162"/>
        <end position="169"/>
    </location>
</feature>
<feature type="strand" evidence="10">
    <location>
        <begin position="181"/>
        <end position="187"/>
    </location>
</feature>
<feature type="helix" evidence="10">
    <location>
        <begin position="192"/>
        <end position="207"/>
    </location>
</feature>
<feature type="strand" evidence="10">
    <location>
        <begin position="219"/>
        <end position="221"/>
    </location>
</feature>
<feature type="helix" evidence="10">
    <location>
        <begin position="224"/>
        <end position="237"/>
    </location>
</feature>
<feature type="helix" evidence="10">
    <location>
        <begin position="239"/>
        <end position="243"/>
    </location>
</feature>
<feature type="helix" evidence="10">
    <location>
        <begin position="253"/>
        <end position="260"/>
    </location>
</feature>
<feature type="strand" evidence="10">
    <location>
        <begin position="262"/>
        <end position="269"/>
    </location>
</feature>
<feature type="helix" evidence="10">
    <location>
        <begin position="272"/>
        <end position="276"/>
    </location>
</feature>
<feature type="helix" evidence="10">
    <location>
        <begin position="277"/>
        <end position="281"/>
    </location>
</feature>
<feature type="strand" evidence="10">
    <location>
        <begin position="283"/>
        <end position="286"/>
    </location>
</feature>
<feature type="strand" evidence="11">
    <location>
        <begin position="289"/>
        <end position="293"/>
    </location>
</feature>
<feature type="strand" evidence="10">
    <location>
        <begin position="298"/>
        <end position="307"/>
    </location>
</feature>
<feature type="helix" evidence="10">
    <location>
        <begin position="313"/>
        <end position="324"/>
    </location>
</feature>
<feature type="helix" evidence="10">
    <location>
        <begin position="326"/>
        <end position="333"/>
    </location>
</feature>
<feature type="strand" evidence="10">
    <location>
        <begin position="346"/>
        <end position="349"/>
    </location>
</feature>
<feature type="helix" evidence="10">
    <location>
        <begin position="350"/>
        <end position="356"/>
    </location>
</feature>
<feature type="turn" evidence="10">
    <location>
        <begin position="357"/>
        <end position="359"/>
    </location>
</feature>
<feature type="helix" evidence="10">
    <location>
        <begin position="362"/>
        <end position="370"/>
    </location>
</feature>
<feature type="helix" evidence="10">
    <location>
        <begin position="384"/>
        <end position="391"/>
    </location>
</feature>
<feature type="turn" evidence="10">
    <location>
        <begin position="392"/>
        <end position="394"/>
    </location>
</feature>
<feature type="helix" evidence="10">
    <location>
        <begin position="395"/>
        <end position="399"/>
    </location>
</feature>
<protein>
    <recommendedName>
        <fullName evidence="4">Thiaminase-1</fullName>
        <ecNumber evidence="1">2.5.1.2</ecNumber>
    </recommendedName>
    <alternativeName>
        <fullName evidence="3">Thiaminase I</fullName>
    </alternativeName>
    <alternativeName>
        <fullName>Thiamine pyridinylase</fullName>
    </alternativeName>
</protein>
<sequence length="409" mass="45214">MSKVKGFIYKPLMVMLALLLVVVSPAGAGAAHSDASSDITLKVAIYPYVPDPARFQAAVLDQWQRQEPGVKLEFTDWDSYSADPPDDLDVFVLDSIFLSHFVDAGYLLPFGSQDIDQAEDVLPFALQGAKRNGEVYGLPQILCTNLLFYRKGDLKIGQVDNIYELYKKIGTSHSEQIPPPQNKGLLINMAGGTTKASMYLEALIDVTGQYTEYDLLPPLDPLNDKVIRGLRLLINMAGEKPSQYVPEDGDAYVRASWFAQGSGRAFIGYSESMMRMGDYAEQVRFKPISSSAGQDIPLFYSDVVSVNSKTAHPELAKKLANVMASADTVEQALRPQADGQYPQYLLPARHQVYEALMQDYPIYSELAQIVNKPSNRVFRLGPEVRTWLKDAKQVLPEALGLTDVSSLAS</sequence>
<keyword id="KW-0002">3D-structure</keyword>
<keyword id="KW-0903">Direct protein sequencing</keyword>
<keyword id="KW-0964">Secreted</keyword>
<keyword id="KW-0732">Signal</keyword>
<keyword id="KW-0785">Thiamine catabolism</keyword>
<keyword id="KW-0808">Transferase</keyword>
<evidence type="ECO:0000269" key="1">
    <source>
    </source>
</evidence>
<evidence type="ECO:0000269" key="2">
    <source>
    </source>
</evidence>
<evidence type="ECO:0000303" key="3">
    <source>
    </source>
</evidence>
<evidence type="ECO:0000303" key="4">
    <source>
    </source>
</evidence>
<evidence type="ECO:0000305" key="5">
    <source>
    </source>
</evidence>
<evidence type="ECO:0000305" key="6">
    <source>
    </source>
</evidence>
<evidence type="ECO:0007744" key="7">
    <source>
        <dbReference type="PDB" id="2THI"/>
    </source>
</evidence>
<evidence type="ECO:0007744" key="8">
    <source>
        <dbReference type="PDB" id="3THI"/>
    </source>
</evidence>
<evidence type="ECO:0007744" key="9">
    <source>
        <dbReference type="PDB" id="4THI"/>
    </source>
</evidence>
<evidence type="ECO:0007829" key="10">
    <source>
        <dbReference type="PDB" id="3THI"/>
    </source>
</evidence>
<evidence type="ECO:0007829" key="11">
    <source>
        <dbReference type="PDB" id="4THI"/>
    </source>
</evidence>
<reference key="1">
    <citation type="journal article" date="1996" name="J. Biol. Chem.">
        <title>Mechanistic studies on thiaminase I. Overexpression and identification of the active site nucleophile.</title>
        <authorList>
            <person name="Costello C.A."/>
            <person name="Kelleher N.L."/>
            <person name="Abe M."/>
            <person name="McLafferty F.W."/>
            <person name="Begley T.P."/>
        </authorList>
    </citation>
    <scope>NUCLEOTIDE SEQUENCE [GENOMIC DNA]</scope>
    <scope>PROTEIN SEQUENCE OF 31-50</scope>
    <scope>MASS SPECTROMETRY</scope>
    <scope>FUNCTION</scope>
    <scope>CATALYTIC ACTIVITY</scope>
    <scope>BIOPHYSICOCHEMICAL PROPERTIES</scope>
    <scope>SUBUNIT</scope>
    <scope>MUTAGENESIS OF CYS-143</scope>
    <scope>ACTIVE SITE</scope>
</reference>
<reference evidence="7 8 9" key="2">
    <citation type="journal article" date="1998" name="Biochemistry">
        <title>Crystal structure of thiaminase-I from Bacillus thiaminolyticus at 2.0-A resolution.</title>
        <authorList>
            <person name="Campobasso N."/>
            <person name="Costello C.A."/>
            <person name="Kinsland C."/>
            <person name="Begley T.P."/>
            <person name="Ealick S.E."/>
        </authorList>
    </citation>
    <scope>X-RAY CRYSTALLOGRAPHY (2.00 ANGSTROMS) OF APOENZYME AND OF 39-409 IN COMPLEX WITH A THIAMINE ANALOG</scope>
    <scope>ACTIVE SITE</scope>
    <scope>MUTAGENESIS OF GLU-271</scope>
</reference>